<protein>
    <recommendedName>
        <fullName evidence="1">Phosphopentomutase</fullName>
        <ecNumber evidence="1">5.4.2.7</ecNumber>
    </recommendedName>
    <alternativeName>
        <fullName evidence="1">Phosphodeoxyribomutase</fullName>
    </alternativeName>
</protein>
<keyword id="KW-0963">Cytoplasm</keyword>
<keyword id="KW-0413">Isomerase</keyword>
<keyword id="KW-0464">Manganese</keyword>
<keyword id="KW-0479">Metal-binding</keyword>
<keyword id="KW-1185">Reference proteome</keyword>
<gene>
    <name evidence="1" type="primary">deoB</name>
    <name type="ordered locus">HP_1179</name>
</gene>
<name>DEOB_HELPY</name>
<dbReference type="EC" id="5.4.2.7" evidence="1"/>
<dbReference type="EMBL" id="AE000511">
    <property type="protein sequence ID" value="AAD08223.1"/>
    <property type="molecule type" value="Genomic_DNA"/>
</dbReference>
<dbReference type="PIR" id="C64667">
    <property type="entry name" value="C64667"/>
</dbReference>
<dbReference type="RefSeq" id="NP_207970.1">
    <property type="nucleotide sequence ID" value="NC_000915.1"/>
</dbReference>
<dbReference type="RefSeq" id="WP_001172180.1">
    <property type="nucleotide sequence ID" value="NC_018939.1"/>
</dbReference>
<dbReference type="SMR" id="P56195"/>
<dbReference type="FunCoup" id="P56195">
    <property type="interactions" value="107"/>
</dbReference>
<dbReference type="STRING" id="85962.HP_1179"/>
<dbReference type="PaxDb" id="85962-C694_06095"/>
<dbReference type="EnsemblBacteria" id="AAD08223">
    <property type="protein sequence ID" value="AAD08223"/>
    <property type="gene ID" value="HP_1179"/>
</dbReference>
<dbReference type="KEGG" id="heo:C694_06095"/>
<dbReference type="KEGG" id="hpy:HP_1179"/>
<dbReference type="PATRIC" id="fig|85962.47.peg.1267"/>
<dbReference type="eggNOG" id="COG1015">
    <property type="taxonomic scope" value="Bacteria"/>
</dbReference>
<dbReference type="InParanoid" id="P56195"/>
<dbReference type="OrthoDB" id="9769930at2"/>
<dbReference type="PhylomeDB" id="P56195"/>
<dbReference type="UniPathway" id="UPA00002">
    <property type="reaction ID" value="UER00467"/>
</dbReference>
<dbReference type="Proteomes" id="UP000000429">
    <property type="component" value="Chromosome"/>
</dbReference>
<dbReference type="GO" id="GO:0005829">
    <property type="term" value="C:cytosol"/>
    <property type="evidence" value="ECO:0000318"/>
    <property type="project" value="GO_Central"/>
</dbReference>
<dbReference type="GO" id="GO:0000287">
    <property type="term" value="F:magnesium ion binding"/>
    <property type="evidence" value="ECO:0007669"/>
    <property type="project" value="InterPro"/>
</dbReference>
<dbReference type="GO" id="GO:0030145">
    <property type="term" value="F:manganese ion binding"/>
    <property type="evidence" value="ECO:0007669"/>
    <property type="project" value="UniProtKB-UniRule"/>
</dbReference>
<dbReference type="GO" id="GO:0008973">
    <property type="term" value="F:phosphopentomutase activity"/>
    <property type="evidence" value="ECO:0000318"/>
    <property type="project" value="GO_Central"/>
</dbReference>
<dbReference type="GO" id="GO:0006018">
    <property type="term" value="P:2-deoxyribose 1-phosphate catabolic process"/>
    <property type="evidence" value="ECO:0007669"/>
    <property type="project" value="UniProtKB-UniRule"/>
</dbReference>
<dbReference type="GO" id="GO:0006015">
    <property type="term" value="P:5-phosphoribose 1-diphosphate biosynthetic process"/>
    <property type="evidence" value="ECO:0007669"/>
    <property type="project" value="UniProtKB-UniPathway"/>
</dbReference>
<dbReference type="GO" id="GO:0043094">
    <property type="term" value="P:metabolic compound salvage"/>
    <property type="evidence" value="ECO:0007669"/>
    <property type="project" value="InterPro"/>
</dbReference>
<dbReference type="GO" id="GO:0009117">
    <property type="term" value="P:nucleotide metabolic process"/>
    <property type="evidence" value="ECO:0007669"/>
    <property type="project" value="InterPro"/>
</dbReference>
<dbReference type="CDD" id="cd16009">
    <property type="entry name" value="PPM"/>
    <property type="match status" value="1"/>
</dbReference>
<dbReference type="FunFam" id="3.30.70.1250:FF:000001">
    <property type="entry name" value="Phosphopentomutase"/>
    <property type="match status" value="1"/>
</dbReference>
<dbReference type="Gene3D" id="3.40.720.10">
    <property type="entry name" value="Alkaline Phosphatase, subunit A"/>
    <property type="match status" value="1"/>
</dbReference>
<dbReference type="Gene3D" id="3.30.70.1250">
    <property type="entry name" value="Phosphopentomutase"/>
    <property type="match status" value="1"/>
</dbReference>
<dbReference type="HAMAP" id="MF_00740">
    <property type="entry name" value="Phosphopentomut"/>
    <property type="match status" value="1"/>
</dbReference>
<dbReference type="InterPro" id="IPR017850">
    <property type="entry name" value="Alkaline_phosphatase_core_sf"/>
</dbReference>
<dbReference type="InterPro" id="IPR010045">
    <property type="entry name" value="DeoB"/>
</dbReference>
<dbReference type="InterPro" id="IPR006124">
    <property type="entry name" value="Metalloenzyme"/>
</dbReference>
<dbReference type="InterPro" id="IPR024052">
    <property type="entry name" value="Phosphopentomutase_DeoB_cap_sf"/>
</dbReference>
<dbReference type="NCBIfam" id="TIGR01696">
    <property type="entry name" value="deoB"/>
    <property type="match status" value="1"/>
</dbReference>
<dbReference type="NCBIfam" id="NF003766">
    <property type="entry name" value="PRK05362.1"/>
    <property type="match status" value="1"/>
</dbReference>
<dbReference type="PANTHER" id="PTHR21110">
    <property type="entry name" value="PHOSPHOPENTOMUTASE"/>
    <property type="match status" value="1"/>
</dbReference>
<dbReference type="PANTHER" id="PTHR21110:SF0">
    <property type="entry name" value="PHOSPHOPENTOMUTASE"/>
    <property type="match status" value="1"/>
</dbReference>
<dbReference type="Pfam" id="PF01676">
    <property type="entry name" value="Metalloenzyme"/>
    <property type="match status" value="1"/>
</dbReference>
<dbReference type="PIRSF" id="PIRSF001491">
    <property type="entry name" value="Ppentomutase"/>
    <property type="match status" value="1"/>
</dbReference>
<dbReference type="SUPFAM" id="SSF53649">
    <property type="entry name" value="Alkaline phosphatase-like"/>
    <property type="match status" value="1"/>
</dbReference>
<dbReference type="SUPFAM" id="SSF143856">
    <property type="entry name" value="DeoB insert domain-like"/>
    <property type="match status" value="1"/>
</dbReference>
<sequence length="413" mass="46180">MQKRVVILLLDSFGIGASEDAKDFGDLGANTLGNIAKACFNNLADSNDRSGALKLPYLESLGLGLSALKAANELPLGFQSQPNLIGAYAYAQELSSAKDTISGHWEMMGAPVLFEWGYFKDKTHSFPKEILDEIVRKTKIKGYLGNCHASGTEIIKDLGEKHLETLYPIFYTSADSVFQIAAHEERFGLDNLYALCEEAFQILEPLKIARVIARPFIGTNRESFKRTANRKDYAIKPHKKLLFETFIEEKRGEVISIGKIADIYAHVGITQKFKAGSLMELCDVTLEQVKNAKNNSLIFTNFVHFDSDYGHRRDISGYANALEYFDARLKEVLENLRENDLLILCADHGCDPSFKGTDHTREYIPVLFYHKDLQPAFLGKSESFADIGQSIAHFLGLSPLDYGKNLLNFKGQP</sequence>
<accession>P56195</accession>
<comment type="function">
    <text evidence="1">Isomerase that catalyzes the conversion of deoxy-ribose 1-phosphate (dRib-1-P) and ribose 1-phosphate (Rib-1-P) to deoxy-ribose 5-phosphate (dRib-5-P) and ribose 5-phosphate (Rib-5-P), respectively.</text>
</comment>
<comment type="catalytic activity">
    <reaction evidence="1">
        <text>2-deoxy-alpha-D-ribose 1-phosphate = 2-deoxy-D-ribose 5-phosphate</text>
        <dbReference type="Rhea" id="RHEA:27658"/>
        <dbReference type="ChEBI" id="CHEBI:57259"/>
        <dbReference type="ChEBI" id="CHEBI:62877"/>
        <dbReference type="EC" id="5.4.2.7"/>
    </reaction>
</comment>
<comment type="catalytic activity">
    <reaction evidence="1">
        <text>alpha-D-ribose 1-phosphate = D-ribose 5-phosphate</text>
        <dbReference type="Rhea" id="RHEA:18793"/>
        <dbReference type="ChEBI" id="CHEBI:57720"/>
        <dbReference type="ChEBI" id="CHEBI:78346"/>
        <dbReference type="EC" id="5.4.2.7"/>
    </reaction>
</comment>
<comment type="cofactor">
    <cofactor evidence="1">
        <name>Mn(2+)</name>
        <dbReference type="ChEBI" id="CHEBI:29035"/>
    </cofactor>
    <text evidence="1">Binds 2 manganese ions.</text>
</comment>
<comment type="pathway">
    <text evidence="1">Carbohydrate degradation; 2-deoxy-D-ribose 1-phosphate degradation; D-glyceraldehyde 3-phosphate and acetaldehyde from 2-deoxy-alpha-D-ribose 1-phosphate: step 1/2.</text>
</comment>
<comment type="subcellular location">
    <subcellularLocation>
        <location evidence="1">Cytoplasm</location>
    </subcellularLocation>
</comment>
<comment type="similarity">
    <text evidence="1">Belongs to the phosphopentomutase family.</text>
</comment>
<organism>
    <name type="scientific">Helicobacter pylori (strain ATCC 700392 / 26695)</name>
    <name type="common">Campylobacter pylori</name>
    <dbReference type="NCBI Taxonomy" id="85962"/>
    <lineage>
        <taxon>Bacteria</taxon>
        <taxon>Pseudomonadati</taxon>
        <taxon>Campylobacterota</taxon>
        <taxon>Epsilonproteobacteria</taxon>
        <taxon>Campylobacterales</taxon>
        <taxon>Helicobacteraceae</taxon>
        <taxon>Helicobacter</taxon>
    </lineage>
</organism>
<proteinExistence type="inferred from homology"/>
<evidence type="ECO:0000255" key="1">
    <source>
        <dbReference type="HAMAP-Rule" id="MF_00740"/>
    </source>
</evidence>
<feature type="chain" id="PRO_0000199824" description="Phosphopentomutase">
    <location>
        <begin position="1"/>
        <end position="413"/>
    </location>
</feature>
<feature type="binding site" evidence="1">
    <location>
        <position position="11"/>
    </location>
    <ligand>
        <name>Mn(2+)</name>
        <dbReference type="ChEBI" id="CHEBI:29035"/>
        <label>1</label>
    </ligand>
</feature>
<feature type="binding site" evidence="1">
    <location>
        <position position="306"/>
    </location>
    <ligand>
        <name>Mn(2+)</name>
        <dbReference type="ChEBI" id="CHEBI:29035"/>
        <label>2</label>
    </ligand>
</feature>
<feature type="binding site" evidence="1">
    <location>
        <position position="311"/>
    </location>
    <ligand>
        <name>Mn(2+)</name>
        <dbReference type="ChEBI" id="CHEBI:29035"/>
        <label>2</label>
    </ligand>
</feature>
<feature type="binding site" evidence="1">
    <location>
        <position position="347"/>
    </location>
    <ligand>
        <name>Mn(2+)</name>
        <dbReference type="ChEBI" id="CHEBI:29035"/>
        <label>1</label>
    </ligand>
</feature>
<feature type="binding site" evidence="1">
    <location>
        <position position="348"/>
    </location>
    <ligand>
        <name>Mn(2+)</name>
        <dbReference type="ChEBI" id="CHEBI:29035"/>
        <label>1</label>
    </ligand>
</feature>
<feature type="binding site" evidence="1">
    <location>
        <position position="359"/>
    </location>
    <ligand>
        <name>Mn(2+)</name>
        <dbReference type="ChEBI" id="CHEBI:29035"/>
        <label>2</label>
    </ligand>
</feature>
<reference key="1">
    <citation type="journal article" date="1997" name="Nature">
        <title>The complete genome sequence of the gastric pathogen Helicobacter pylori.</title>
        <authorList>
            <person name="Tomb J.-F."/>
            <person name="White O."/>
            <person name="Kerlavage A.R."/>
            <person name="Clayton R.A."/>
            <person name="Sutton G.G."/>
            <person name="Fleischmann R.D."/>
            <person name="Ketchum K.A."/>
            <person name="Klenk H.-P."/>
            <person name="Gill S.R."/>
            <person name="Dougherty B.A."/>
            <person name="Nelson K.E."/>
            <person name="Quackenbush J."/>
            <person name="Zhou L."/>
            <person name="Kirkness E.F."/>
            <person name="Peterson S.N."/>
            <person name="Loftus B.J."/>
            <person name="Richardson D.L."/>
            <person name="Dodson R.J."/>
            <person name="Khalak H.G."/>
            <person name="Glodek A."/>
            <person name="McKenney K."/>
            <person name="FitzGerald L.M."/>
            <person name="Lee N."/>
            <person name="Adams M.D."/>
            <person name="Hickey E.K."/>
            <person name="Berg D.E."/>
            <person name="Gocayne J.D."/>
            <person name="Utterback T.R."/>
            <person name="Peterson J.D."/>
            <person name="Kelley J.M."/>
            <person name="Cotton M.D."/>
            <person name="Weidman J.F."/>
            <person name="Fujii C."/>
            <person name="Bowman C."/>
            <person name="Watthey L."/>
            <person name="Wallin E."/>
            <person name="Hayes W.S."/>
            <person name="Borodovsky M."/>
            <person name="Karp P.D."/>
            <person name="Smith H.O."/>
            <person name="Fraser C.M."/>
            <person name="Venter J.C."/>
        </authorList>
    </citation>
    <scope>NUCLEOTIDE SEQUENCE [LARGE SCALE GENOMIC DNA]</scope>
    <source>
        <strain>ATCC 700392 / 26695</strain>
    </source>
</reference>